<comment type="function">
    <text evidence="1">Catalyzes the reversible transfer of the terminal phosphate group between ATP and AMP. Plays an important role in cellular energy homeostasis and in adenine nucleotide metabolism.</text>
</comment>
<comment type="catalytic activity">
    <reaction evidence="1">
        <text>AMP + ATP = 2 ADP</text>
        <dbReference type="Rhea" id="RHEA:12973"/>
        <dbReference type="ChEBI" id="CHEBI:30616"/>
        <dbReference type="ChEBI" id="CHEBI:456215"/>
        <dbReference type="ChEBI" id="CHEBI:456216"/>
        <dbReference type="EC" id="2.7.4.3"/>
    </reaction>
</comment>
<comment type="pathway">
    <text evidence="1">Purine metabolism; AMP biosynthesis via salvage pathway; AMP from ADP: step 1/1.</text>
</comment>
<comment type="subunit">
    <text evidence="1">Monomer.</text>
</comment>
<comment type="subcellular location">
    <subcellularLocation>
        <location evidence="1">Cytoplasm</location>
    </subcellularLocation>
</comment>
<comment type="domain">
    <text evidence="1">Consists of three domains, a large central CORE domain and two small peripheral domains, NMPbind and LID, which undergo movements during catalysis. The LID domain closes over the site of phosphoryl transfer upon ATP binding. Assembling and dissambling the active center during each catalytic cycle provides an effective means to prevent ATP hydrolysis.</text>
</comment>
<comment type="similarity">
    <text evidence="1">Belongs to the adenylate kinase family.</text>
</comment>
<organism>
    <name type="scientific">Salmonella paratyphi A (strain AKU_12601)</name>
    <dbReference type="NCBI Taxonomy" id="554290"/>
    <lineage>
        <taxon>Bacteria</taxon>
        <taxon>Pseudomonadati</taxon>
        <taxon>Pseudomonadota</taxon>
        <taxon>Gammaproteobacteria</taxon>
        <taxon>Enterobacterales</taxon>
        <taxon>Enterobacteriaceae</taxon>
        <taxon>Salmonella</taxon>
    </lineage>
</organism>
<sequence length="214" mass="23488">MRIILLGAPGAGKGTQAQFIMEKYGIPQISTGDMLRAAVKSGSELGKQAKDIMDAGKLVTDELVIALVKERIAQEDCRNGFLLDGFPRTIPQADAMKEAGIVVDYVLEFDVPDELIVDRIVGRRVHAASGRVYHVKFNPPKVEGKDDVTGEDLTTRKDDQEETVRKRLVEYHQMTAPLIGYYQKEAEAGNTKYAKVDGTQAVADVRAALEKILG</sequence>
<keyword id="KW-0067">ATP-binding</keyword>
<keyword id="KW-0963">Cytoplasm</keyword>
<keyword id="KW-0418">Kinase</keyword>
<keyword id="KW-0545">Nucleotide biosynthesis</keyword>
<keyword id="KW-0547">Nucleotide-binding</keyword>
<keyword id="KW-0808">Transferase</keyword>
<accession>B5BD44</accession>
<proteinExistence type="inferred from homology"/>
<reference key="1">
    <citation type="journal article" date="2009" name="BMC Genomics">
        <title>Pseudogene accumulation in the evolutionary histories of Salmonella enterica serovars Paratyphi A and Typhi.</title>
        <authorList>
            <person name="Holt K.E."/>
            <person name="Thomson N.R."/>
            <person name="Wain J."/>
            <person name="Langridge G.C."/>
            <person name="Hasan R."/>
            <person name="Bhutta Z.A."/>
            <person name="Quail M.A."/>
            <person name="Norbertczak H."/>
            <person name="Walker D."/>
            <person name="Simmonds M."/>
            <person name="White B."/>
            <person name="Bason N."/>
            <person name="Mungall K."/>
            <person name="Dougan G."/>
            <person name="Parkhill J."/>
        </authorList>
    </citation>
    <scope>NUCLEOTIDE SEQUENCE [LARGE SCALE GENOMIC DNA]</scope>
    <source>
        <strain>AKU_12601</strain>
    </source>
</reference>
<feature type="chain" id="PRO_1000100606" description="Adenylate kinase">
    <location>
        <begin position="1"/>
        <end position="214"/>
    </location>
</feature>
<feature type="region of interest" description="NMP" evidence="1">
    <location>
        <begin position="30"/>
        <end position="59"/>
    </location>
</feature>
<feature type="region of interest" description="LID">
    <location>
        <begin position="122"/>
        <end position="159"/>
    </location>
</feature>
<feature type="binding site" evidence="1">
    <location>
        <begin position="10"/>
        <end position="15"/>
    </location>
    <ligand>
        <name>ATP</name>
        <dbReference type="ChEBI" id="CHEBI:30616"/>
    </ligand>
</feature>
<feature type="binding site" evidence="1">
    <location>
        <position position="31"/>
    </location>
    <ligand>
        <name>AMP</name>
        <dbReference type="ChEBI" id="CHEBI:456215"/>
    </ligand>
</feature>
<feature type="binding site" evidence="1">
    <location>
        <position position="36"/>
    </location>
    <ligand>
        <name>AMP</name>
        <dbReference type="ChEBI" id="CHEBI:456215"/>
    </ligand>
</feature>
<feature type="binding site" evidence="1">
    <location>
        <begin position="57"/>
        <end position="59"/>
    </location>
    <ligand>
        <name>AMP</name>
        <dbReference type="ChEBI" id="CHEBI:456215"/>
    </ligand>
</feature>
<feature type="binding site" evidence="1">
    <location>
        <begin position="85"/>
        <end position="88"/>
    </location>
    <ligand>
        <name>AMP</name>
        <dbReference type="ChEBI" id="CHEBI:456215"/>
    </ligand>
</feature>
<feature type="binding site" evidence="1">
    <location>
        <position position="92"/>
    </location>
    <ligand>
        <name>AMP</name>
        <dbReference type="ChEBI" id="CHEBI:456215"/>
    </ligand>
</feature>
<feature type="binding site" evidence="1">
    <location>
        <position position="123"/>
    </location>
    <ligand>
        <name>ATP</name>
        <dbReference type="ChEBI" id="CHEBI:30616"/>
    </ligand>
</feature>
<feature type="binding site" evidence="1">
    <location>
        <begin position="132"/>
        <end position="133"/>
    </location>
    <ligand>
        <name>ATP</name>
        <dbReference type="ChEBI" id="CHEBI:30616"/>
    </ligand>
</feature>
<feature type="binding site" evidence="1">
    <location>
        <position position="156"/>
    </location>
    <ligand>
        <name>AMP</name>
        <dbReference type="ChEBI" id="CHEBI:456215"/>
    </ligand>
</feature>
<feature type="binding site" evidence="1">
    <location>
        <position position="167"/>
    </location>
    <ligand>
        <name>AMP</name>
        <dbReference type="ChEBI" id="CHEBI:456215"/>
    </ligand>
</feature>
<feature type="binding site" evidence="1">
    <location>
        <position position="200"/>
    </location>
    <ligand>
        <name>ATP</name>
        <dbReference type="ChEBI" id="CHEBI:30616"/>
    </ligand>
</feature>
<dbReference type="EC" id="2.7.4.3" evidence="1"/>
<dbReference type="EMBL" id="FM200053">
    <property type="protein sequence ID" value="CAR60287.1"/>
    <property type="molecule type" value="Genomic_DNA"/>
</dbReference>
<dbReference type="RefSeq" id="WP_001220237.1">
    <property type="nucleotide sequence ID" value="NC_011147.1"/>
</dbReference>
<dbReference type="SMR" id="B5BD44"/>
<dbReference type="KEGG" id="sek:SSPA2077"/>
<dbReference type="HOGENOM" id="CLU_032354_1_2_6"/>
<dbReference type="UniPathway" id="UPA00588">
    <property type="reaction ID" value="UER00649"/>
</dbReference>
<dbReference type="Proteomes" id="UP000001869">
    <property type="component" value="Chromosome"/>
</dbReference>
<dbReference type="GO" id="GO:0005737">
    <property type="term" value="C:cytoplasm"/>
    <property type="evidence" value="ECO:0007669"/>
    <property type="project" value="UniProtKB-SubCell"/>
</dbReference>
<dbReference type="GO" id="GO:0004017">
    <property type="term" value="F:adenylate kinase activity"/>
    <property type="evidence" value="ECO:0007669"/>
    <property type="project" value="UniProtKB-UniRule"/>
</dbReference>
<dbReference type="GO" id="GO:0005524">
    <property type="term" value="F:ATP binding"/>
    <property type="evidence" value="ECO:0007669"/>
    <property type="project" value="UniProtKB-UniRule"/>
</dbReference>
<dbReference type="GO" id="GO:0044209">
    <property type="term" value="P:AMP salvage"/>
    <property type="evidence" value="ECO:0007669"/>
    <property type="project" value="UniProtKB-UniRule"/>
</dbReference>
<dbReference type="CDD" id="cd01428">
    <property type="entry name" value="ADK"/>
    <property type="match status" value="1"/>
</dbReference>
<dbReference type="FunFam" id="3.40.50.300:FF:000106">
    <property type="entry name" value="Adenylate kinase mitochondrial"/>
    <property type="match status" value="1"/>
</dbReference>
<dbReference type="Gene3D" id="3.40.50.300">
    <property type="entry name" value="P-loop containing nucleotide triphosphate hydrolases"/>
    <property type="match status" value="1"/>
</dbReference>
<dbReference type="HAMAP" id="MF_00235">
    <property type="entry name" value="Adenylate_kinase_Adk"/>
    <property type="match status" value="1"/>
</dbReference>
<dbReference type="InterPro" id="IPR006259">
    <property type="entry name" value="Adenyl_kin_sub"/>
</dbReference>
<dbReference type="InterPro" id="IPR000850">
    <property type="entry name" value="Adenylat/UMP-CMP_kin"/>
</dbReference>
<dbReference type="InterPro" id="IPR033690">
    <property type="entry name" value="Adenylat_kinase_CS"/>
</dbReference>
<dbReference type="InterPro" id="IPR007862">
    <property type="entry name" value="Adenylate_kinase_lid-dom"/>
</dbReference>
<dbReference type="InterPro" id="IPR027417">
    <property type="entry name" value="P-loop_NTPase"/>
</dbReference>
<dbReference type="NCBIfam" id="TIGR01351">
    <property type="entry name" value="adk"/>
    <property type="match status" value="1"/>
</dbReference>
<dbReference type="NCBIfam" id="NF001379">
    <property type="entry name" value="PRK00279.1-1"/>
    <property type="match status" value="1"/>
</dbReference>
<dbReference type="NCBIfam" id="NF001380">
    <property type="entry name" value="PRK00279.1-2"/>
    <property type="match status" value="1"/>
</dbReference>
<dbReference type="NCBIfam" id="NF001381">
    <property type="entry name" value="PRK00279.1-3"/>
    <property type="match status" value="1"/>
</dbReference>
<dbReference type="NCBIfam" id="NF011100">
    <property type="entry name" value="PRK14527.1"/>
    <property type="match status" value="1"/>
</dbReference>
<dbReference type="PANTHER" id="PTHR23359">
    <property type="entry name" value="NUCLEOTIDE KINASE"/>
    <property type="match status" value="1"/>
</dbReference>
<dbReference type="Pfam" id="PF00406">
    <property type="entry name" value="ADK"/>
    <property type="match status" value="1"/>
</dbReference>
<dbReference type="Pfam" id="PF05191">
    <property type="entry name" value="ADK_lid"/>
    <property type="match status" value="1"/>
</dbReference>
<dbReference type="PRINTS" id="PR00094">
    <property type="entry name" value="ADENYLTKNASE"/>
</dbReference>
<dbReference type="SUPFAM" id="SSF52540">
    <property type="entry name" value="P-loop containing nucleoside triphosphate hydrolases"/>
    <property type="match status" value="1"/>
</dbReference>
<dbReference type="PROSITE" id="PS00113">
    <property type="entry name" value="ADENYLATE_KINASE"/>
    <property type="match status" value="1"/>
</dbReference>
<evidence type="ECO:0000255" key="1">
    <source>
        <dbReference type="HAMAP-Rule" id="MF_00235"/>
    </source>
</evidence>
<protein>
    <recommendedName>
        <fullName evidence="1">Adenylate kinase</fullName>
        <shortName evidence="1">AK</shortName>
        <ecNumber evidence="1">2.7.4.3</ecNumber>
    </recommendedName>
    <alternativeName>
        <fullName evidence="1">ATP-AMP transphosphorylase</fullName>
    </alternativeName>
    <alternativeName>
        <fullName evidence="1">ATP:AMP phosphotransferase</fullName>
    </alternativeName>
    <alternativeName>
        <fullName evidence="1">Adenylate monophosphate kinase</fullName>
    </alternativeName>
</protein>
<name>KAD_SALPK</name>
<gene>
    <name evidence="1" type="primary">adk</name>
    <name type="ordered locus">SSPA2077</name>
</gene>